<proteinExistence type="inferred from homology"/>
<sequence length="317" mass="35014">MVKETVTVAKTCSHCGHNGHNARTCLNGVNKASVKLFGVNISSDPIRPPEVTALRKSLSLGNLDALLANDESNGSGDPIAAVDDTGYHSDGQIHSKKGKTAHEKKKGKPWTEEEHRNFLIGLNKLGKGDWRGIAKSFVSTRTPTQVASHAQKYFIRLNVNDKRKRRASLFDISLEDQKEKERNSQDASTKTPPKQPITGIQQPVVQGHTQTEISNRFQNLSMEYMPIYQPIPPYYNFPPIMYHPNYPMYYANPQVPVRFVHPSGIPVPRHIPIGLPLSQPSEASNMTNKDGLDLHIGLPPQATGASDLTGHGVIHVK</sequence>
<protein>
    <recommendedName>
        <fullName evidence="5">Probable transcription factor At5g61620</fullName>
    </recommendedName>
    <alternativeName>
        <fullName evidence="5">Myb-related protein At5g61620</fullName>
    </alternativeName>
</protein>
<feature type="chain" id="PRO_0000438828" description="Probable transcription factor At5g61620">
    <location>
        <begin position="1"/>
        <end position="317"/>
    </location>
</feature>
<feature type="domain" description="HTH myb-type" evidence="2">
    <location>
        <begin position="102"/>
        <end position="158"/>
    </location>
</feature>
<feature type="zinc finger region" description="CCHC-type" evidence="1">
    <location>
        <begin position="12"/>
        <end position="25"/>
    </location>
</feature>
<feature type="DNA-binding region" description="H-T-H motif" evidence="2">
    <location>
        <begin position="130"/>
        <end position="154"/>
    </location>
</feature>
<feature type="region of interest" description="Disordered" evidence="3">
    <location>
        <begin position="77"/>
        <end position="111"/>
    </location>
</feature>
<feature type="region of interest" description="Disordered" evidence="3">
    <location>
        <begin position="173"/>
        <end position="206"/>
    </location>
</feature>
<feature type="compositionally biased region" description="Basic residues" evidence="3">
    <location>
        <begin position="94"/>
        <end position="108"/>
    </location>
</feature>
<feature type="compositionally biased region" description="Basic and acidic residues" evidence="3">
    <location>
        <begin position="175"/>
        <end position="184"/>
    </location>
</feature>
<feature type="compositionally biased region" description="Polar residues" evidence="3">
    <location>
        <begin position="185"/>
        <end position="206"/>
    </location>
</feature>
<accession>Q9FKF9</accession>
<keyword id="KW-0238">DNA-binding</keyword>
<keyword id="KW-0479">Metal-binding</keyword>
<keyword id="KW-0539">Nucleus</keyword>
<keyword id="KW-1185">Reference proteome</keyword>
<keyword id="KW-0804">Transcription</keyword>
<keyword id="KW-0805">Transcription regulation</keyword>
<keyword id="KW-0862">Zinc</keyword>
<keyword id="KW-0863">Zinc-finger</keyword>
<organism>
    <name type="scientific">Arabidopsis thaliana</name>
    <name type="common">Mouse-ear cress</name>
    <dbReference type="NCBI Taxonomy" id="3702"/>
    <lineage>
        <taxon>Eukaryota</taxon>
        <taxon>Viridiplantae</taxon>
        <taxon>Streptophyta</taxon>
        <taxon>Embryophyta</taxon>
        <taxon>Tracheophyta</taxon>
        <taxon>Spermatophyta</taxon>
        <taxon>Magnoliopsida</taxon>
        <taxon>eudicotyledons</taxon>
        <taxon>Gunneridae</taxon>
        <taxon>Pentapetalae</taxon>
        <taxon>rosids</taxon>
        <taxon>malvids</taxon>
        <taxon>Brassicales</taxon>
        <taxon>Brassicaceae</taxon>
        <taxon>Camelineae</taxon>
        <taxon>Arabidopsis</taxon>
    </lineage>
</organism>
<dbReference type="EMBL" id="AB012239">
    <property type="protein sequence ID" value="BAB09006.1"/>
    <property type="molecule type" value="Genomic_DNA"/>
</dbReference>
<dbReference type="EMBL" id="CP002688">
    <property type="protein sequence ID" value="AED97498.1"/>
    <property type="molecule type" value="Genomic_DNA"/>
</dbReference>
<dbReference type="RefSeq" id="NP_200970.1">
    <property type="nucleotide sequence ID" value="NM_125556.2"/>
</dbReference>
<dbReference type="SMR" id="Q9FKF9"/>
<dbReference type="FunCoup" id="Q9FKF9">
    <property type="interactions" value="51"/>
</dbReference>
<dbReference type="IntAct" id="Q9FKF9">
    <property type="interactions" value="8"/>
</dbReference>
<dbReference type="STRING" id="3702.Q9FKF9"/>
<dbReference type="PaxDb" id="3702-AT5G61620.1"/>
<dbReference type="ProteomicsDB" id="238883"/>
<dbReference type="EnsemblPlants" id="AT5G61620.1">
    <property type="protein sequence ID" value="AT5G61620.1"/>
    <property type="gene ID" value="AT5G61620"/>
</dbReference>
<dbReference type="GeneID" id="836284"/>
<dbReference type="Gramene" id="AT5G61620.1">
    <property type="protein sequence ID" value="AT5G61620.1"/>
    <property type="gene ID" value="AT5G61620"/>
</dbReference>
<dbReference type="KEGG" id="ath:AT5G61620"/>
<dbReference type="Araport" id="AT5G61620"/>
<dbReference type="TAIR" id="AT5G61620"/>
<dbReference type="eggNOG" id="ENOG502RYHB">
    <property type="taxonomic scope" value="Eukaryota"/>
</dbReference>
<dbReference type="HOGENOM" id="CLU_038424_5_2_1"/>
<dbReference type="InParanoid" id="Q9FKF9"/>
<dbReference type="OMA" id="SMEYMPI"/>
<dbReference type="OrthoDB" id="118550at2759"/>
<dbReference type="PhylomeDB" id="Q9FKF9"/>
<dbReference type="PRO" id="PR:Q9FKF9"/>
<dbReference type="Proteomes" id="UP000006548">
    <property type="component" value="Chromosome 5"/>
</dbReference>
<dbReference type="ExpressionAtlas" id="Q9FKF9">
    <property type="expression patterns" value="baseline and differential"/>
</dbReference>
<dbReference type="GO" id="GO:0005634">
    <property type="term" value="C:nucleus"/>
    <property type="evidence" value="ECO:0007669"/>
    <property type="project" value="UniProtKB-SubCell"/>
</dbReference>
<dbReference type="GO" id="GO:0003677">
    <property type="term" value="F:DNA binding"/>
    <property type="evidence" value="ECO:0007669"/>
    <property type="project" value="UniProtKB-KW"/>
</dbReference>
<dbReference type="GO" id="GO:0003700">
    <property type="term" value="F:DNA-binding transcription factor activity"/>
    <property type="evidence" value="ECO:0000250"/>
    <property type="project" value="TAIR"/>
</dbReference>
<dbReference type="GO" id="GO:0008270">
    <property type="term" value="F:zinc ion binding"/>
    <property type="evidence" value="ECO:0007669"/>
    <property type="project" value="UniProtKB-KW"/>
</dbReference>
<dbReference type="GO" id="GO:0006355">
    <property type="term" value="P:regulation of DNA-templated transcription"/>
    <property type="evidence" value="ECO:0000304"/>
    <property type="project" value="TAIR"/>
</dbReference>
<dbReference type="CDD" id="cd00167">
    <property type="entry name" value="SANT"/>
    <property type="match status" value="1"/>
</dbReference>
<dbReference type="FunFam" id="1.10.10.60:FF:000009">
    <property type="entry name" value="transcription factor MYB1R1"/>
    <property type="match status" value="1"/>
</dbReference>
<dbReference type="Gene3D" id="1.10.10.60">
    <property type="entry name" value="Homeodomain-like"/>
    <property type="match status" value="1"/>
</dbReference>
<dbReference type="InterPro" id="IPR009057">
    <property type="entry name" value="Homeodomain-like_sf"/>
</dbReference>
<dbReference type="InterPro" id="IPR017930">
    <property type="entry name" value="Myb_dom"/>
</dbReference>
<dbReference type="InterPro" id="IPR006447">
    <property type="entry name" value="Myb_dom_plants"/>
</dbReference>
<dbReference type="InterPro" id="IPR052245">
    <property type="entry name" value="Plant_Stress_Dev_TF"/>
</dbReference>
<dbReference type="InterPro" id="IPR001005">
    <property type="entry name" value="SANT/Myb"/>
</dbReference>
<dbReference type="InterPro" id="IPR017884">
    <property type="entry name" value="SANT_dom"/>
</dbReference>
<dbReference type="InterPro" id="IPR001878">
    <property type="entry name" value="Znf_CCHC"/>
</dbReference>
<dbReference type="NCBIfam" id="TIGR01557">
    <property type="entry name" value="myb_SHAQKYF"/>
    <property type="match status" value="1"/>
</dbReference>
<dbReference type="PANTHER" id="PTHR44191">
    <property type="entry name" value="TRANSCRIPTION FACTOR KUA1"/>
    <property type="match status" value="1"/>
</dbReference>
<dbReference type="PANTHER" id="PTHR44191:SF45">
    <property type="entry name" value="TRANSCRIPTION FACTOR MYB1R1-LIKE"/>
    <property type="match status" value="1"/>
</dbReference>
<dbReference type="Pfam" id="PF00249">
    <property type="entry name" value="Myb_DNA-binding"/>
    <property type="match status" value="1"/>
</dbReference>
<dbReference type="SMART" id="SM00717">
    <property type="entry name" value="SANT"/>
    <property type="match status" value="1"/>
</dbReference>
<dbReference type="SUPFAM" id="SSF46689">
    <property type="entry name" value="Homeodomain-like"/>
    <property type="match status" value="1"/>
</dbReference>
<dbReference type="PROSITE" id="PS51294">
    <property type="entry name" value="HTH_MYB"/>
    <property type="match status" value="1"/>
</dbReference>
<dbReference type="PROSITE" id="PS50158">
    <property type="entry name" value="ZF_CCHC"/>
    <property type="match status" value="1"/>
</dbReference>
<name>M5162_ARATH</name>
<gene>
    <name evidence="6" type="ordered locus">At5g61620</name>
    <name evidence="7" type="ORF">K11J9.15</name>
</gene>
<evidence type="ECO:0000255" key="1">
    <source>
        <dbReference type="PROSITE-ProRule" id="PRU00047"/>
    </source>
</evidence>
<evidence type="ECO:0000255" key="2">
    <source>
        <dbReference type="PROSITE-ProRule" id="PRU00625"/>
    </source>
</evidence>
<evidence type="ECO:0000256" key="3">
    <source>
        <dbReference type="SAM" id="MobiDB-lite"/>
    </source>
</evidence>
<evidence type="ECO:0000269" key="4">
    <source>
    </source>
</evidence>
<evidence type="ECO:0000305" key="5"/>
<evidence type="ECO:0000312" key="6">
    <source>
        <dbReference type="Araport" id="AT5G61620"/>
    </source>
</evidence>
<evidence type="ECO:0000312" key="7">
    <source>
        <dbReference type="EMBL" id="BAB09006.1"/>
    </source>
</evidence>
<reference key="1">
    <citation type="journal article" date="1998" name="DNA Res.">
        <title>Structural analysis of Arabidopsis thaliana chromosome 5. VI. Sequence features of the regions of 1,367,185 bp covered by 19 physically assigned P1 and TAC clones.</title>
        <authorList>
            <person name="Kotani H."/>
            <person name="Nakamura Y."/>
            <person name="Sato S."/>
            <person name="Asamizu E."/>
            <person name="Kaneko T."/>
            <person name="Miyajima N."/>
            <person name="Tabata S."/>
        </authorList>
    </citation>
    <scope>NUCLEOTIDE SEQUENCE [LARGE SCALE GENOMIC DNA]</scope>
    <source>
        <strain>cv. Columbia</strain>
    </source>
</reference>
<reference key="2">
    <citation type="journal article" date="2017" name="Plant J.">
        <title>Araport11: a complete reannotation of the Arabidopsis thaliana reference genome.</title>
        <authorList>
            <person name="Cheng C.Y."/>
            <person name="Krishnakumar V."/>
            <person name="Chan A.P."/>
            <person name="Thibaud-Nissen F."/>
            <person name="Schobel S."/>
            <person name="Town C.D."/>
        </authorList>
    </citation>
    <scope>GENOME REANNOTATION</scope>
    <source>
        <strain>cv. Columbia</strain>
    </source>
</reference>
<reference key="3">
    <citation type="journal article" date="2016" name="J. Plant Physiol.">
        <title>Stress-related function of bHLH109 in somatic embryo induction in Arabidopsis.</title>
        <authorList>
            <person name="Nowak K."/>
            <person name="Gaj M.D."/>
        </authorList>
    </citation>
    <scope>FUNCTION</scope>
</reference>
<comment type="function">
    <text evidence="4">Probable transcription factor involved in somatic embryogenesis. Acts as a positive regulator of BHLH109.</text>
</comment>
<comment type="subcellular location">
    <subcellularLocation>
        <location evidence="2">Nucleus</location>
    </subcellularLocation>
</comment>